<dbReference type="EC" id="3.6.1.-" evidence="1"/>
<dbReference type="EMBL" id="CP001396">
    <property type="protein sequence ID" value="ACR63924.1"/>
    <property type="molecule type" value="Genomic_DNA"/>
</dbReference>
<dbReference type="RefSeq" id="WP_000564489.1">
    <property type="nucleotide sequence ID" value="NC_012759.1"/>
</dbReference>
<dbReference type="SMR" id="C4ZZY2"/>
<dbReference type="GeneID" id="75203778"/>
<dbReference type="KEGG" id="ebw:BWG_2565"/>
<dbReference type="HOGENOM" id="CLU_087195_3_2_6"/>
<dbReference type="GO" id="GO:0005737">
    <property type="term" value="C:cytoplasm"/>
    <property type="evidence" value="ECO:0007669"/>
    <property type="project" value="TreeGrafter"/>
</dbReference>
<dbReference type="GO" id="GO:0046872">
    <property type="term" value="F:metal ion binding"/>
    <property type="evidence" value="ECO:0007669"/>
    <property type="project" value="UniProtKB-KW"/>
</dbReference>
<dbReference type="GO" id="GO:0034353">
    <property type="term" value="F:mRNA 5'-diphosphatase activity"/>
    <property type="evidence" value="ECO:0007669"/>
    <property type="project" value="TreeGrafter"/>
</dbReference>
<dbReference type="GO" id="GO:0006402">
    <property type="term" value="P:mRNA catabolic process"/>
    <property type="evidence" value="ECO:0007669"/>
    <property type="project" value="TreeGrafter"/>
</dbReference>
<dbReference type="CDD" id="cd03671">
    <property type="entry name" value="NUDIX_Ap4A_hydrolase_plant_like"/>
    <property type="match status" value="1"/>
</dbReference>
<dbReference type="FunFam" id="3.90.79.10:FF:000001">
    <property type="entry name" value="RNA pyrophosphohydrolase"/>
    <property type="match status" value="1"/>
</dbReference>
<dbReference type="Gene3D" id="3.90.79.10">
    <property type="entry name" value="Nucleoside Triphosphate Pyrophosphohydrolase"/>
    <property type="match status" value="1"/>
</dbReference>
<dbReference type="HAMAP" id="MF_00298">
    <property type="entry name" value="Nudix_RppH"/>
    <property type="match status" value="1"/>
</dbReference>
<dbReference type="InterPro" id="IPR020476">
    <property type="entry name" value="Nudix_hydrolase"/>
</dbReference>
<dbReference type="InterPro" id="IPR015797">
    <property type="entry name" value="NUDIX_hydrolase-like_dom_sf"/>
</dbReference>
<dbReference type="InterPro" id="IPR020084">
    <property type="entry name" value="NUDIX_hydrolase_CS"/>
</dbReference>
<dbReference type="InterPro" id="IPR000086">
    <property type="entry name" value="NUDIX_hydrolase_dom"/>
</dbReference>
<dbReference type="InterPro" id="IPR022927">
    <property type="entry name" value="RppH"/>
</dbReference>
<dbReference type="NCBIfam" id="NF001934">
    <property type="entry name" value="PRK00714.1-1"/>
    <property type="match status" value="1"/>
</dbReference>
<dbReference type="NCBIfam" id="NF001937">
    <property type="entry name" value="PRK00714.1-4"/>
    <property type="match status" value="1"/>
</dbReference>
<dbReference type="NCBIfam" id="NF001938">
    <property type="entry name" value="PRK00714.1-5"/>
    <property type="match status" value="1"/>
</dbReference>
<dbReference type="PANTHER" id="PTHR23114">
    <property type="entry name" value="M7GPPPN-MRNA HYDROLASE"/>
    <property type="match status" value="1"/>
</dbReference>
<dbReference type="PANTHER" id="PTHR23114:SF17">
    <property type="entry name" value="M7GPPPN-MRNA HYDROLASE"/>
    <property type="match status" value="1"/>
</dbReference>
<dbReference type="Pfam" id="PF00293">
    <property type="entry name" value="NUDIX"/>
    <property type="match status" value="1"/>
</dbReference>
<dbReference type="PRINTS" id="PR00502">
    <property type="entry name" value="NUDIXFAMILY"/>
</dbReference>
<dbReference type="SUPFAM" id="SSF55811">
    <property type="entry name" value="Nudix"/>
    <property type="match status" value="1"/>
</dbReference>
<dbReference type="PROSITE" id="PS51462">
    <property type="entry name" value="NUDIX"/>
    <property type="match status" value="1"/>
</dbReference>
<dbReference type="PROSITE" id="PS00893">
    <property type="entry name" value="NUDIX_BOX"/>
    <property type="match status" value="1"/>
</dbReference>
<comment type="function">
    <text evidence="1">Accelerates the degradation of transcripts by removing pyrophosphate from the 5'-end of triphosphorylated RNA, leading to a more labile monophosphorylated state that can stimulate subsequent ribonuclease cleavage.</text>
</comment>
<comment type="cofactor">
    <cofactor evidence="1">
        <name>a divalent metal cation</name>
        <dbReference type="ChEBI" id="CHEBI:60240"/>
    </cofactor>
</comment>
<comment type="similarity">
    <text evidence="1">Belongs to the Nudix hydrolase family. RppH subfamily.</text>
</comment>
<organism>
    <name type="scientific">Escherichia coli (strain K12 / MC4100 / BW2952)</name>
    <dbReference type="NCBI Taxonomy" id="595496"/>
    <lineage>
        <taxon>Bacteria</taxon>
        <taxon>Pseudomonadati</taxon>
        <taxon>Pseudomonadota</taxon>
        <taxon>Gammaproteobacteria</taxon>
        <taxon>Enterobacterales</taxon>
        <taxon>Enterobacteriaceae</taxon>
        <taxon>Escherichia</taxon>
    </lineage>
</organism>
<evidence type="ECO:0000255" key="1">
    <source>
        <dbReference type="HAMAP-Rule" id="MF_00298"/>
    </source>
</evidence>
<proteinExistence type="inferred from homology"/>
<protein>
    <recommendedName>
        <fullName evidence="1">RNA pyrophosphohydrolase</fullName>
        <ecNumber evidence="1">3.6.1.-</ecNumber>
    </recommendedName>
    <alternativeName>
        <fullName evidence="1">(Di)nucleoside polyphosphate hydrolase</fullName>
    </alternativeName>
</protein>
<accession>C4ZZY2</accession>
<name>RPPH_ECOBW</name>
<reference key="1">
    <citation type="journal article" date="2009" name="J. Bacteriol.">
        <title>Genomic sequencing reveals regulatory mutations and recombinational events in the widely used MC4100 lineage of Escherichia coli K-12.</title>
        <authorList>
            <person name="Ferenci T."/>
            <person name="Zhou Z."/>
            <person name="Betteridge T."/>
            <person name="Ren Y."/>
            <person name="Liu Y."/>
            <person name="Feng L."/>
            <person name="Reeves P.R."/>
            <person name="Wang L."/>
        </authorList>
    </citation>
    <scope>NUCLEOTIDE SEQUENCE [LARGE SCALE GENOMIC DNA]</scope>
    <source>
        <strain>K12 / MC4100 / BW2952</strain>
    </source>
</reference>
<gene>
    <name evidence="1" type="primary">rppH</name>
    <name evidence="1" type="synonym">nudH</name>
    <name type="ordered locus">BWG_2565</name>
</gene>
<keyword id="KW-0378">Hydrolase</keyword>
<keyword id="KW-0479">Metal-binding</keyword>
<sequence length="176" mass="20795">MIDDDGYRPNVGIVICNRQGQVMWARRFGQHSWQFPQGGINPGESAEQAMYRELFEEVGLSRKDVRILASTRNWLRYKLPKRLVRWDTKPVCIGQKQKWFLLQLVSGDAEINMQTSSTPEFDGWRWVSYWYPVRQVVSFKRDVYRRVMKEFASVVMSLQENTPKPQNASAYRRKRG</sequence>
<feature type="chain" id="PRO_1000204933" description="RNA pyrophosphohydrolase">
    <location>
        <begin position="1"/>
        <end position="176"/>
    </location>
</feature>
<feature type="domain" description="Nudix hydrolase" evidence="1">
    <location>
        <begin position="6"/>
        <end position="149"/>
    </location>
</feature>
<feature type="short sequence motif" description="Nudix box">
    <location>
        <begin position="38"/>
        <end position="59"/>
    </location>
</feature>